<dbReference type="EC" id="3.1.26.5" evidence="1"/>
<dbReference type="EMBL" id="AP006878">
    <property type="protein sequence ID" value="BAD85639.1"/>
    <property type="molecule type" value="Genomic_DNA"/>
</dbReference>
<dbReference type="RefSeq" id="WP_011250401.1">
    <property type="nucleotide sequence ID" value="NC_006624.1"/>
</dbReference>
<dbReference type="PDB" id="3WYZ">
    <property type="method" value="X-ray"/>
    <property type="resolution" value="2.21 A"/>
    <property type="chains" value="A=1-220"/>
</dbReference>
<dbReference type="PDB" id="3WZ0">
    <property type="method" value="X-ray"/>
    <property type="resolution" value="2.79 A"/>
    <property type="chains" value="E/F=1-220"/>
</dbReference>
<dbReference type="PDBsum" id="3WYZ"/>
<dbReference type="PDBsum" id="3WZ0"/>
<dbReference type="SMR" id="Q5JH47"/>
<dbReference type="STRING" id="69014.TK1450"/>
<dbReference type="EnsemblBacteria" id="BAD85639">
    <property type="protein sequence ID" value="BAD85639"/>
    <property type="gene ID" value="TK1450"/>
</dbReference>
<dbReference type="GeneID" id="78447973"/>
<dbReference type="KEGG" id="tko:TK1450"/>
<dbReference type="PATRIC" id="fig|69014.16.peg.1412"/>
<dbReference type="eggNOG" id="arCOG00307">
    <property type="taxonomic scope" value="Archaea"/>
</dbReference>
<dbReference type="HOGENOM" id="CLU_1302679_0_0_2"/>
<dbReference type="InParanoid" id="Q5JH47"/>
<dbReference type="OrthoDB" id="85765at2157"/>
<dbReference type="PhylomeDB" id="Q5JH47"/>
<dbReference type="EvolutionaryTrace" id="Q5JH47"/>
<dbReference type="Proteomes" id="UP000000536">
    <property type="component" value="Chromosome"/>
</dbReference>
<dbReference type="GO" id="GO:0005737">
    <property type="term" value="C:cytoplasm"/>
    <property type="evidence" value="ECO:0007669"/>
    <property type="project" value="UniProtKB-SubCell"/>
</dbReference>
<dbReference type="GO" id="GO:0030677">
    <property type="term" value="C:ribonuclease P complex"/>
    <property type="evidence" value="ECO:0007669"/>
    <property type="project" value="UniProtKB-UniRule"/>
</dbReference>
<dbReference type="GO" id="GO:0004526">
    <property type="term" value="F:ribonuclease P activity"/>
    <property type="evidence" value="ECO:0007669"/>
    <property type="project" value="UniProtKB-UniRule"/>
</dbReference>
<dbReference type="GO" id="GO:0003723">
    <property type="term" value="F:RNA binding"/>
    <property type="evidence" value="ECO:0000318"/>
    <property type="project" value="GO_Central"/>
</dbReference>
<dbReference type="GO" id="GO:0001682">
    <property type="term" value="P:tRNA 5'-leader removal"/>
    <property type="evidence" value="ECO:0007669"/>
    <property type="project" value="UniProtKB-UniRule"/>
</dbReference>
<dbReference type="FunFam" id="3.20.20.140:FF:000270">
    <property type="entry name" value="Ribonuclease P protein component 3"/>
    <property type="match status" value="1"/>
</dbReference>
<dbReference type="Gene3D" id="3.20.20.140">
    <property type="entry name" value="Metal-dependent hydrolases"/>
    <property type="match status" value="1"/>
</dbReference>
<dbReference type="HAMAP" id="MF_00756">
    <property type="entry name" value="RNase_P_3"/>
    <property type="match status" value="1"/>
</dbReference>
<dbReference type="InterPro" id="IPR016195">
    <property type="entry name" value="Pol/histidinol_Pase-like"/>
</dbReference>
<dbReference type="InterPro" id="IPR023539">
    <property type="entry name" value="RNase_P_comp-3_arc"/>
</dbReference>
<dbReference type="InterPro" id="IPR002738">
    <property type="entry name" value="RNase_P_p30"/>
</dbReference>
<dbReference type="NCBIfam" id="NF003023">
    <property type="entry name" value="PRK03892.1"/>
    <property type="match status" value="1"/>
</dbReference>
<dbReference type="PANTHER" id="PTHR13031:SF0">
    <property type="entry name" value="RIBONUCLEASE P PROTEIN SUBUNIT P30"/>
    <property type="match status" value="1"/>
</dbReference>
<dbReference type="PANTHER" id="PTHR13031">
    <property type="entry name" value="RIBONUCLEASE P SUBUNIT P30"/>
    <property type="match status" value="1"/>
</dbReference>
<dbReference type="Pfam" id="PF01876">
    <property type="entry name" value="RNase_P_p30"/>
    <property type="match status" value="1"/>
</dbReference>
<dbReference type="SUPFAM" id="SSF89550">
    <property type="entry name" value="PHP domain-like"/>
    <property type="match status" value="1"/>
</dbReference>
<keyword id="KW-0002">3D-structure</keyword>
<keyword id="KW-0963">Cytoplasm</keyword>
<keyword id="KW-0255">Endonuclease</keyword>
<keyword id="KW-0378">Hydrolase</keyword>
<keyword id="KW-0540">Nuclease</keyword>
<keyword id="KW-1185">Reference proteome</keyword>
<keyword id="KW-0819">tRNA processing</keyword>
<gene>
    <name evidence="1" type="primary">rnp3</name>
    <name type="ordered locus">TK1450</name>
</gene>
<comment type="function">
    <text evidence="1">Part of ribonuclease P, a protein complex that generates mature tRNA molecules by cleaving their 5'-ends.</text>
</comment>
<comment type="catalytic activity">
    <reaction evidence="1">
        <text>Endonucleolytic cleavage of RNA, removing 5'-extranucleotides from tRNA precursor.</text>
        <dbReference type="EC" id="3.1.26.5"/>
    </reaction>
</comment>
<comment type="subunit">
    <text evidence="1">Consists of a catalytic RNA component and at least 4-5 protein subunits.</text>
</comment>
<comment type="subcellular location">
    <subcellularLocation>
        <location evidence="1">Cytoplasm</location>
    </subcellularLocation>
</comment>
<comment type="similarity">
    <text evidence="1">Belongs to the eukaryotic/archaeal RNase P protein component 3 family.</text>
</comment>
<accession>Q5JH47</accession>
<sequence length="220" mass="25270">MSEEEVSFSRDYFVEMDVRDEEAHELASDWFDEVVFTKKLVLEDPPDWGSLKEELKELRGKYGKVALLLVTRKPSLIREVKSRNLKALLYVQGGDMRINRMAIESGVDALISPWFGRKDPGFDHTLAGMAARRGVAIGFSLSPLLNANPYGRAQILRFMMKTWQLVKKYRVPRFITSSAESRWEVRGPRDLMSLGINIGMEIPEARASLNFYPRTIVWKL</sequence>
<name>RNP3_THEKO</name>
<organism>
    <name type="scientific">Thermococcus kodakarensis (strain ATCC BAA-918 / JCM 12380 / KOD1)</name>
    <name type="common">Pyrococcus kodakaraensis (strain KOD1)</name>
    <dbReference type="NCBI Taxonomy" id="69014"/>
    <lineage>
        <taxon>Archaea</taxon>
        <taxon>Methanobacteriati</taxon>
        <taxon>Methanobacteriota</taxon>
        <taxon>Thermococci</taxon>
        <taxon>Thermococcales</taxon>
        <taxon>Thermococcaceae</taxon>
        <taxon>Thermococcus</taxon>
    </lineage>
</organism>
<feature type="chain" id="PRO_0000140047" description="Ribonuclease P protein component 3">
    <location>
        <begin position="1"/>
        <end position="220"/>
    </location>
</feature>
<feature type="strand" evidence="2">
    <location>
        <begin position="14"/>
        <end position="18"/>
    </location>
</feature>
<feature type="helix" evidence="2">
    <location>
        <begin position="21"/>
        <end position="30"/>
    </location>
</feature>
<feature type="strand" evidence="2">
    <location>
        <begin position="32"/>
        <end position="41"/>
    </location>
</feature>
<feature type="helix" evidence="2">
    <location>
        <begin position="48"/>
        <end position="62"/>
    </location>
</feature>
<feature type="strand" evidence="2">
    <location>
        <begin position="63"/>
        <end position="70"/>
    </location>
</feature>
<feature type="helix" evidence="2">
    <location>
        <begin position="74"/>
        <end position="83"/>
    </location>
</feature>
<feature type="strand" evidence="2">
    <location>
        <begin position="86"/>
        <end position="92"/>
    </location>
</feature>
<feature type="helix" evidence="2">
    <location>
        <begin position="96"/>
        <end position="104"/>
    </location>
</feature>
<feature type="strand" evidence="2">
    <location>
        <begin position="108"/>
        <end position="111"/>
    </location>
</feature>
<feature type="turn" evidence="2">
    <location>
        <begin position="113"/>
        <end position="116"/>
    </location>
</feature>
<feature type="strand" evidence="2">
    <location>
        <begin position="117"/>
        <end position="119"/>
    </location>
</feature>
<feature type="helix" evidence="2">
    <location>
        <begin position="124"/>
        <end position="133"/>
    </location>
</feature>
<feature type="strand" evidence="2">
    <location>
        <begin position="136"/>
        <end position="141"/>
    </location>
</feature>
<feature type="helix" evidence="2">
    <location>
        <begin position="142"/>
        <end position="145"/>
    </location>
</feature>
<feature type="helix" evidence="2">
    <location>
        <begin position="149"/>
        <end position="168"/>
    </location>
</feature>
<feature type="strand" evidence="2">
    <location>
        <begin position="173"/>
        <end position="176"/>
    </location>
</feature>
<feature type="strand" evidence="2">
    <location>
        <begin position="179"/>
        <end position="181"/>
    </location>
</feature>
<feature type="helix" evidence="2">
    <location>
        <begin position="182"/>
        <end position="184"/>
    </location>
</feature>
<feature type="helix" evidence="2">
    <location>
        <begin position="188"/>
        <end position="198"/>
    </location>
</feature>
<feature type="helix" evidence="2">
    <location>
        <begin position="202"/>
        <end position="209"/>
    </location>
</feature>
<feature type="helix" evidence="2">
    <location>
        <begin position="211"/>
        <end position="217"/>
    </location>
</feature>
<reference key="1">
    <citation type="journal article" date="2005" name="Genome Res.">
        <title>Complete genome sequence of the hyperthermophilic archaeon Thermococcus kodakaraensis KOD1 and comparison with Pyrococcus genomes.</title>
        <authorList>
            <person name="Fukui T."/>
            <person name="Atomi H."/>
            <person name="Kanai T."/>
            <person name="Matsumi R."/>
            <person name="Fujiwara S."/>
            <person name="Imanaka T."/>
        </authorList>
    </citation>
    <scope>NUCLEOTIDE SEQUENCE [LARGE SCALE GENOMIC DNA]</scope>
    <source>
        <strain>ATCC BAA-918 / JCM 12380 / KOD1</strain>
    </source>
</reference>
<proteinExistence type="evidence at protein level"/>
<evidence type="ECO:0000255" key="1">
    <source>
        <dbReference type="HAMAP-Rule" id="MF_00756"/>
    </source>
</evidence>
<evidence type="ECO:0007829" key="2">
    <source>
        <dbReference type="PDB" id="3WYZ"/>
    </source>
</evidence>
<protein>
    <recommendedName>
        <fullName evidence="1">Ribonuclease P protein component 3</fullName>
        <shortName evidence="1">RNase P component 3</shortName>
        <ecNumber evidence="1">3.1.26.5</ecNumber>
    </recommendedName>
    <alternativeName>
        <fullName evidence="1">Rpp30</fullName>
    </alternativeName>
</protein>